<organism>
    <name type="scientific">Methanocella arvoryzae (strain DSM 22066 / NBRC 105507 / MRE50)</name>
    <dbReference type="NCBI Taxonomy" id="351160"/>
    <lineage>
        <taxon>Archaea</taxon>
        <taxon>Methanobacteriati</taxon>
        <taxon>Methanobacteriota</taxon>
        <taxon>Stenosarchaea group</taxon>
        <taxon>Methanomicrobia</taxon>
        <taxon>Methanocellales</taxon>
        <taxon>Methanocellaceae</taxon>
        <taxon>Methanocella</taxon>
    </lineage>
</organism>
<reference key="1">
    <citation type="journal article" date="2006" name="Science">
        <title>Genome of rice cluster I archaea -- the key methane producers in the rice rhizosphere.</title>
        <authorList>
            <person name="Erkel C."/>
            <person name="Kube M."/>
            <person name="Reinhardt R."/>
            <person name="Liesack W."/>
        </authorList>
    </citation>
    <scope>NUCLEOTIDE SEQUENCE [LARGE SCALE GENOMIC DNA]</scope>
    <source>
        <strain>DSM 22066 / NBRC 105507 / MRE50</strain>
    </source>
</reference>
<name>AROC_METAR</name>
<dbReference type="EC" id="4.2.3.5" evidence="1"/>
<dbReference type="EMBL" id="AM114193">
    <property type="protein sequence ID" value="CAJ35935.1"/>
    <property type="molecule type" value="Genomic_DNA"/>
</dbReference>
<dbReference type="RefSeq" id="WP_012036570.1">
    <property type="nucleotide sequence ID" value="NC_009464.1"/>
</dbReference>
<dbReference type="SMR" id="Q0W6Q8"/>
<dbReference type="STRING" id="351160.RCIX509"/>
<dbReference type="GeneID" id="5144742"/>
<dbReference type="KEGG" id="rci:RCIX509"/>
<dbReference type="PATRIC" id="fig|351160.9.peg.2302"/>
<dbReference type="eggNOG" id="arCOG04133">
    <property type="taxonomic scope" value="Archaea"/>
</dbReference>
<dbReference type="OrthoDB" id="33049at2157"/>
<dbReference type="UniPathway" id="UPA00053">
    <property type="reaction ID" value="UER00090"/>
</dbReference>
<dbReference type="Proteomes" id="UP000000663">
    <property type="component" value="Chromosome"/>
</dbReference>
<dbReference type="GO" id="GO:0005829">
    <property type="term" value="C:cytosol"/>
    <property type="evidence" value="ECO:0007669"/>
    <property type="project" value="TreeGrafter"/>
</dbReference>
<dbReference type="GO" id="GO:0004107">
    <property type="term" value="F:chorismate synthase activity"/>
    <property type="evidence" value="ECO:0007669"/>
    <property type="project" value="UniProtKB-UniRule"/>
</dbReference>
<dbReference type="GO" id="GO:0010181">
    <property type="term" value="F:FMN binding"/>
    <property type="evidence" value="ECO:0007669"/>
    <property type="project" value="TreeGrafter"/>
</dbReference>
<dbReference type="GO" id="GO:0008652">
    <property type="term" value="P:amino acid biosynthetic process"/>
    <property type="evidence" value="ECO:0007669"/>
    <property type="project" value="UniProtKB-KW"/>
</dbReference>
<dbReference type="GO" id="GO:0009073">
    <property type="term" value="P:aromatic amino acid family biosynthetic process"/>
    <property type="evidence" value="ECO:0007669"/>
    <property type="project" value="UniProtKB-KW"/>
</dbReference>
<dbReference type="GO" id="GO:0009423">
    <property type="term" value="P:chorismate biosynthetic process"/>
    <property type="evidence" value="ECO:0007669"/>
    <property type="project" value="UniProtKB-UniRule"/>
</dbReference>
<dbReference type="CDD" id="cd07304">
    <property type="entry name" value="Chorismate_synthase"/>
    <property type="match status" value="1"/>
</dbReference>
<dbReference type="FunFam" id="3.60.150.10:FF:000002">
    <property type="entry name" value="Chorismate synthase"/>
    <property type="match status" value="1"/>
</dbReference>
<dbReference type="Gene3D" id="3.60.150.10">
    <property type="entry name" value="Chorismate synthase AroC"/>
    <property type="match status" value="1"/>
</dbReference>
<dbReference type="HAMAP" id="MF_00300">
    <property type="entry name" value="Chorismate_synth"/>
    <property type="match status" value="1"/>
</dbReference>
<dbReference type="InterPro" id="IPR000453">
    <property type="entry name" value="Chorismate_synth"/>
</dbReference>
<dbReference type="InterPro" id="IPR035904">
    <property type="entry name" value="Chorismate_synth_AroC_sf"/>
</dbReference>
<dbReference type="InterPro" id="IPR020541">
    <property type="entry name" value="Chorismate_synthase_CS"/>
</dbReference>
<dbReference type="NCBIfam" id="TIGR00033">
    <property type="entry name" value="aroC"/>
    <property type="match status" value="1"/>
</dbReference>
<dbReference type="NCBIfam" id="NF003793">
    <property type="entry name" value="PRK05382.1"/>
    <property type="match status" value="1"/>
</dbReference>
<dbReference type="PANTHER" id="PTHR21085">
    <property type="entry name" value="CHORISMATE SYNTHASE"/>
    <property type="match status" value="1"/>
</dbReference>
<dbReference type="PANTHER" id="PTHR21085:SF0">
    <property type="entry name" value="CHORISMATE SYNTHASE"/>
    <property type="match status" value="1"/>
</dbReference>
<dbReference type="Pfam" id="PF01264">
    <property type="entry name" value="Chorismate_synt"/>
    <property type="match status" value="1"/>
</dbReference>
<dbReference type="PIRSF" id="PIRSF001456">
    <property type="entry name" value="Chorismate_synth"/>
    <property type="match status" value="1"/>
</dbReference>
<dbReference type="SUPFAM" id="SSF103263">
    <property type="entry name" value="Chorismate synthase, AroC"/>
    <property type="match status" value="1"/>
</dbReference>
<dbReference type="PROSITE" id="PS00787">
    <property type="entry name" value="CHORISMATE_SYNTHASE_1"/>
    <property type="match status" value="1"/>
</dbReference>
<dbReference type="PROSITE" id="PS00788">
    <property type="entry name" value="CHORISMATE_SYNTHASE_2"/>
    <property type="match status" value="1"/>
</dbReference>
<dbReference type="PROSITE" id="PS00789">
    <property type="entry name" value="CHORISMATE_SYNTHASE_3"/>
    <property type="match status" value="1"/>
</dbReference>
<comment type="function">
    <text evidence="1">Catalyzes the anti-1,4-elimination of the C-3 phosphate and the C-6 proR hydrogen from 5-enolpyruvylshikimate-3-phosphate (EPSP) to yield chorismate, which is the branch point compound that serves as the starting substrate for the three terminal pathways of aromatic amino acid biosynthesis. This reaction introduces a second double bond into the aromatic ring system.</text>
</comment>
<comment type="catalytic activity">
    <reaction evidence="1">
        <text>5-O-(1-carboxyvinyl)-3-phosphoshikimate = chorismate + phosphate</text>
        <dbReference type="Rhea" id="RHEA:21020"/>
        <dbReference type="ChEBI" id="CHEBI:29748"/>
        <dbReference type="ChEBI" id="CHEBI:43474"/>
        <dbReference type="ChEBI" id="CHEBI:57701"/>
        <dbReference type="EC" id="4.2.3.5"/>
    </reaction>
</comment>
<comment type="cofactor">
    <cofactor evidence="1">
        <name>FMNH2</name>
        <dbReference type="ChEBI" id="CHEBI:57618"/>
    </cofactor>
    <text evidence="1">Reduced FMN (FMNH(2)).</text>
</comment>
<comment type="pathway">
    <text evidence="1">Metabolic intermediate biosynthesis; chorismate biosynthesis; chorismate from D-erythrose 4-phosphate and phosphoenolpyruvate: step 7/7.</text>
</comment>
<comment type="similarity">
    <text evidence="1">Belongs to the chorismate synthase family.</text>
</comment>
<keyword id="KW-0028">Amino-acid biosynthesis</keyword>
<keyword id="KW-0057">Aromatic amino acid biosynthesis</keyword>
<keyword id="KW-0274">FAD</keyword>
<keyword id="KW-0285">Flavoprotein</keyword>
<keyword id="KW-0288">FMN</keyword>
<keyword id="KW-0456">Lyase</keyword>
<keyword id="KW-0521">NADP</keyword>
<keyword id="KW-1185">Reference proteome</keyword>
<feature type="chain" id="PRO_1000022569" description="Chorismate synthase">
    <location>
        <begin position="1"/>
        <end position="372"/>
    </location>
</feature>
<feature type="binding site" evidence="1">
    <location>
        <position position="48"/>
    </location>
    <ligand>
        <name>NADP(+)</name>
        <dbReference type="ChEBI" id="CHEBI:58349"/>
    </ligand>
</feature>
<feature type="binding site" evidence="1">
    <location>
        <begin position="125"/>
        <end position="127"/>
    </location>
    <ligand>
        <name>FMN</name>
        <dbReference type="ChEBI" id="CHEBI:58210"/>
    </ligand>
</feature>
<feature type="binding site" evidence="1">
    <location>
        <position position="285"/>
    </location>
    <ligand>
        <name>FMN</name>
        <dbReference type="ChEBI" id="CHEBI:58210"/>
    </ligand>
</feature>
<feature type="binding site" evidence="1">
    <location>
        <begin position="300"/>
        <end position="304"/>
    </location>
    <ligand>
        <name>FMN</name>
        <dbReference type="ChEBI" id="CHEBI:58210"/>
    </ligand>
</feature>
<feature type="binding site" evidence="1">
    <location>
        <position position="327"/>
    </location>
    <ligand>
        <name>FMN</name>
        <dbReference type="ChEBI" id="CHEBI:58210"/>
    </ligand>
</feature>
<evidence type="ECO:0000255" key="1">
    <source>
        <dbReference type="HAMAP-Rule" id="MF_00300"/>
    </source>
</evidence>
<proteinExistence type="inferred from homology"/>
<accession>Q0W6Q8</accession>
<gene>
    <name evidence="1" type="primary">aroC</name>
    <name type="ordered locus">UNCMA_22500</name>
    <name type="ORF">RCIX509</name>
</gene>
<sequence length="372" mass="38671">MTGNTFGNAFRITTFGESHGPGLGVVIDGCPAGLPLTEADVQAELDKRKPGQSEVTTQRKEADMVEILSGVFEGLTTGTPIAMLVRNADARSAAYENIRNIARPGHADFGYMEKYGMRDYRGGGRSSGRETLSRVAGGAVAKKLLSLYGVEVHAHTVAIGNVRAKPATIEEIKANVWKNPVRCADLSAADAMLREVSAAREASDSVGGIVEIVATGVPAGVGTPAFDKLDACLAYALMGIGGVKAVEIGAGIASAGMRGSEMNDEFCTEDGKVRTKTNRCGGILGGISTGMPIVCRAAIKPTPSISRPQRTVNLETGAETIIEITGRHDPSIVPRAVPVAEAMVALVIVDQMISGGLINPVSAGAVDASRNR</sequence>
<protein>
    <recommendedName>
        <fullName evidence="1">Chorismate synthase</fullName>
        <shortName evidence="1">CS</shortName>
        <ecNumber evidence="1">4.2.3.5</ecNumber>
    </recommendedName>
    <alternativeName>
        <fullName evidence="1">5-enolpyruvylshikimate-3-phosphate phospholyase</fullName>
    </alternativeName>
</protein>